<protein>
    <recommendedName>
        <fullName evidence="1">UDP-3-O-acylglucosamine N-acyltransferase</fullName>
        <ecNumber evidence="1">2.3.1.191</ecNumber>
    </recommendedName>
</protein>
<comment type="function">
    <text evidence="1">Catalyzes the N-acylation of UDP-3-O-acylglucosamine using 3-hydroxyacyl-ACP as the acyl donor. Is involved in the biosynthesis of lipid A, a phosphorylated glycolipid that anchors the lipopolysaccharide to the outer membrane of the cell.</text>
</comment>
<comment type="catalytic activity">
    <reaction evidence="1">
        <text>a UDP-3-O-[(3R)-3-hydroxyacyl]-alpha-D-glucosamine + a (3R)-hydroxyacyl-[ACP] = a UDP-2-N,3-O-bis[(3R)-3-hydroxyacyl]-alpha-D-glucosamine + holo-[ACP] + H(+)</text>
        <dbReference type="Rhea" id="RHEA:53836"/>
        <dbReference type="Rhea" id="RHEA-COMP:9685"/>
        <dbReference type="Rhea" id="RHEA-COMP:9945"/>
        <dbReference type="ChEBI" id="CHEBI:15378"/>
        <dbReference type="ChEBI" id="CHEBI:64479"/>
        <dbReference type="ChEBI" id="CHEBI:78827"/>
        <dbReference type="ChEBI" id="CHEBI:137740"/>
        <dbReference type="ChEBI" id="CHEBI:137748"/>
        <dbReference type="EC" id="2.3.1.191"/>
    </reaction>
</comment>
<comment type="pathway">
    <text evidence="1">Bacterial outer membrane biogenesis; LPS lipid A biosynthesis.</text>
</comment>
<comment type="subunit">
    <text evidence="1">Homotrimer.</text>
</comment>
<comment type="similarity">
    <text evidence="1">Belongs to the transferase hexapeptide repeat family. LpxD subfamily.</text>
</comment>
<organism>
    <name type="scientific">Acinetobacter baumannii (strain AB0057)</name>
    <dbReference type="NCBI Taxonomy" id="480119"/>
    <lineage>
        <taxon>Bacteria</taxon>
        <taxon>Pseudomonadati</taxon>
        <taxon>Pseudomonadota</taxon>
        <taxon>Gammaproteobacteria</taxon>
        <taxon>Moraxellales</taxon>
        <taxon>Moraxellaceae</taxon>
        <taxon>Acinetobacter</taxon>
        <taxon>Acinetobacter calcoaceticus/baumannii complex</taxon>
    </lineage>
</organism>
<keyword id="KW-0012">Acyltransferase</keyword>
<keyword id="KW-0441">Lipid A biosynthesis</keyword>
<keyword id="KW-0444">Lipid biosynthesis</keyword>
<keyword id="KW-0443">Lipid metabolism</keyword>
<keyword id="KW-0677">Repeat</keyword>
<keyword id="KW-0808">Transferase</keyword>
<name>LPXD_ACIB5</name>
<sequence>MKVQQYRLDELTHLVKGELIGEGSLQFSNLASLENAEVNHLTFVNGEKHLDQAKVSRAGAYIVTAALKEHLPEKDNFIIVDNPYLAFAILTHVFDKKISSTGIESTAQIHPSAVISETAYIGHYVVIGENCVVGDNTVIQSHTKLDDNVEVGKDCFIDSHVTITGGSKLRDRVRIHSSTVIGGEGFGFAPYQGKWHRIAQLGSVLIGNDVRIGSNCSIDRGALDNTILEDGVIIDNLVQIAHNVHIGSNTAIAAKCGIAGSTKIGKNCILAGACGVAGHLSIADNVTLTGMSMVTKNISEAGTYSSGTGLFENNHWKKTIVRLRQLADVPLTQITKRLDHIQAQIESLESTFNLRK</sequence>
<reference key="1">
    <citation type="journal article" date="2008" name="J. Bacteriol.">
        <title>Comparative genome sequence analysis of multidrug-resistant Acinetobacter baumannii.</title>
        <authorList>
            <person name="Adams M.D."/>
            <person name="Goglin K."/>
            <person name="Molyneaux N."/>
            <person name="Hujer K.M."/>
            <person name="Lavender H."/>
            <person name="Jamison J.J."/>
            <person name="MacDonald I.J."/>
            <person name="Martin K.M."/>
            <person name="Russo T."/>
            <person name="Campagnari A.A."/>
            <person name="Hujer A.M."/>
            <person name="Bonomo R.A."/>
            <person name="Gill S.R."/>
        </authorList>
    </citation>
    <scope>NUCLEOTIDE SEQUENCE [LARGE SCALE GENOMIC DNA]</scope>
    <source>
        <strain>AB0057</strain>
    </source>
</reference>
<accession>B7I9U5</accession>
<dbReference type="EC" id="2.3.1.191" evidence="1"/>
<dbReference type="EMBL" id="CP001182">
    <property type="protein sequence ID" value="ACJ42428.1"/>
    <property type="molecule type" value="Genomic_DNA"/>
</dbReference>
<dbReference type="RefSeq" id="WP_000868109.1">
    <property type="nucleotide sequence ID" value="NC_011586.2"/>
</dbReference>
<dbReference type="SMR" id="B7I9U5"/>
<dbReference type="KEGG" id="abn:AB57_2312"/>
<dbReference type="HOGENOM" id="CLU_049865_0_1_6"/>
<dbReference type="UniPathway" id="UPA00973"/>
<dbReference type="Proteomes" id="UP000007094">
    <property type="component" value="Chromosome"/>
</dbReference>
<dbReference type="GO" id="GO:0016020">
    <property type="term" value="C:membrane"/>
    <property type="evidence" value="ECO:0007669"/>
    <property type="project" value="GOC"/>
</dbReference>
<dbReference type="GO" id="GO:0016410">
    <property type="term" value="F:N-acyltransferase activity"/>
    <property type="evidence" value="ECO:0007669"/>
    <property type="project" value="InterPro"/>
</dbReference>
<dbReference type="GO" id="GO:0009245">
    <property type="term" value="P:lipid A biosynthetic process"/>
    <property type="evidence" value="ECO:0007669"/>
    <property type="project" value="UniProtKB-UniRule"/>
</dbReference>
<dbReference type="CDD" id="cd03352">
    <property type="entry name" value="LbH_LpxD"/>
    <property type="match status" value="1"/>
</dbReference>
<dbReference type="Gene3D" id="1.20.5.170">
    <property type="match status" value="1"/>
</dbReference>
<dbReference type="Gene3D" id="2.160.10.10">
    <property type="entry name" value="Hexapeptide repeat proteins"/>
    <property type="match status" value="1"/>
</dbReference>
<dbReference type="Gene3D" id="3.40.1390.10">
    <property type="entry name" value="MurE/MurF, N-terminal domain"/>
    <property type="match status" value="1"/>
</dbReference>
<dbReference type="HAMAP" id="MF_00523">
    <property type="entry name" value="LpxD"/>
    <property type="match status" value="1"/>
</dbReference>
<dbReference type="InterPro" id="IPR001451">
    <property type="entry name" value="Hexapep"/>
</dbReference>
<dbReference type="InterPro" id="IPR007691">
    <property type="entry name" value="LpxD"/>
</dbReference>
<dbReference type="InterPro" id="IPR011004">
    <property type="entry name" value="Trimer_LpxA-like_sf"/>
</dbReference>
<dbReference type="InterPro" id="IPR020573">
    <property type="entry name" value="UDP_GlcNAc_AcTrfase_non-rep"/>
</dbReference>
<dbReference type="NCBIfam" id="TIGR01853">
    <property type="entry name" value="lipid_A_lpxD"/>
    <property type="match status" value="1"/>
</dbReference>
<dbReference type="NCBIfam" id="NF002060">
    <property type="entry name" value="PRK00892.1"/>
    <property type="match status" value="1"/>
</dbReference>
<dbReference type="PANTHER" id="PTHR43378">
    <property type="entry name" value="UDP-3-O-ACYLGLUCOSAMINE N-ACYLTRANSFERASE"/>
    <property type="match status" value="1"/>
</dbReference>
<dbReference type="PANTHER" id="PTHR43378:SF2">
    <property type="entry name" value="UDP-3-O-ACYLGLUCOSAMINE N-ACYLTRANSFERASE 1, MITOCHONDRIAL-RELATED"/>
    <property type="match status" value="1"/>
</dbReference>
<dbReference type="Pfam" id="PF00132">
    <property type="entry name" value="Hexapep"/>
    <property type="match status" value="2"/>
</dbReference>
<dbReference type="Pfam" id="PF04613">
    <property type="entry name" value="LpxD"/>
    <property type="match status" value="1"/>
</dbReference>
<dbReference type="SUPFAM" id="SSF51161">
    <property type="entry name" value="Trimeric LpxA-like enzymes"/>
    <property type="match status" value="1"/>
</dbReference>
<gene>
    <name evidence="1" type="primary">lpxD</name>
    <name type="ordered locus">AB57_2312</name>
</gene>
<feature type="chain" id="PRO_1000127654" description="UDP-3-O-acylglucosamine N-acyltransferase">
    <location>
        <begin position="1"/>
        <end position="356"/>
    </location>
</feature>
<feature type="active site" description="Proton acceptor" evidence="1">
    <location>
        <position position="242"/>
    </location>
</feature>
<proteinExistence type="inferred from homology"/>
<evidence type="ECO:0000255" key="1">
    <source>
        <dbReference type="HAMAP-Rule" id="MF_00523"/>
    </source>
</evidence>